<protein>
    <recommendedName>
        <fullName>Probable serine/threonine-protein kinase DDB_G0278521</fullName>
        <ecNumber>2.7.11.1</ecNumber>
    </recommendedName>
</protein>
<proteinExistence type="inferred from homology"/>
<dbReference type="EC" id="2.7.11.1"/>
<dbReference type="EMBL" id="AAFI02000023">
    <property type="protein sequence ID" value="EAL68433.1"/>
    <property type="molecule type" value="Genomic_DNA"/>
</dbReference>
<dbReference type="RefSeq" id="XP_642416.1">
    <property type="nucleotide sequence ID" value="XM_637324.1"/>
</dbReference>
<dbReference type="SMR" id="Q54XY6"/>
<dbReference type="FunCoup" id="Q54XY6">
    <property type="interactions" value="465"/>
</dbReference>
<dbReference type="PaxDb" id="44689-DDB0230019"/>
<dbReference type="EnsemblProtists" id="EAL68433">
    <property type="protein sequence ID" value="EAL68433"/>
    <property type="gene ID" value="DDB_G0278521"/>
</dbReference>
<dbReference type="GeneID" id="8621621"/>
<dbReference type="KEGG" id="ddi:DDB_G0278521"/>
<dbReference type="dictyBase" id="DDB_G0278521"/>
<dbReference type="VEuPathDB" id="AmoebaDB:DDB_G0278521"/>
<dbReference type="eggNOG" id="KOG0192">
    <property type="taxonomic scope" value="Eukaryota"/>
</dbReference>
<dbReference type="HOGENOM" id="CLU_319913_0_0_1"/>
<dbReference type="InParanoid" id="Q54XY6"/>
<dbReference type="OMA" id="NIANGMN"/>
<dbReference type="PhylomeDB" id="Q54XY6"/>
<dbReference type="PRO" id="PR:Q54XY6"/>
<dbReference type="Proteomes" id="UP000002195">
    <property type="component" value="Chromosome 3"/>
</dbReference>
<dbReference type="GO" id="GO:0005737">
    <property type="term" value="C:cytoplasm"/>
    <property type="evidence" value="ECO:0000318"/>
    <property type="project" value="GO_Central"/>
</dbReference>
<dbReference type="GO" id="GO:0016020">
    <property type="term" value="C:membrane"/>
    <property type="evidence" value="ECO:0007669"/>
    <property type="project" value="UniProtKB-SubCell"/>
</dbReference>
<dbReference type="GO" id="GO:0005524">
    <property type="term" value="F:ATP binding"/>
    <property type="evidence" value="ECO:0007669"/>
    <property type="project" value="UniProtKB-KW"/>
</dbReference>
<dbReference type="GO" id="GO:0004672">
    <property type="term" value="F:protein kinase activity"/>
    <property type="evidence" value="ECO:0000318"/>
    <property type="project" value="GO_Central"/>
</dbReference>
<dbReference type="GO" id="GO:0106310">
    <property type="term" value="F:protein serine kinase activity"/>
    <property type="evidence" value="ECO:0007669"/>
    <property type="project" value="RHEA"/>
</dbReference>
<dbReference type="GO" id="GO:0004674">
    <property type="term" value="F:protein serine/threonine kinase activity"/>
    <property type="evidence" value="ECO:0007669"/>
    <property type="project" value="UniProtKB-KW"/>
</dbReference>
<dbReference type="GO" id="GO:0007165">
    <property type="term" value="P:signal transduction"/>
    <property type="evidence" value="ECO:0000318"/>
    <property type="project" value="GO_Central"/>
</dbReference>
<dbReference type="CDD" id="cd13999">
    <property type="entry name" value="STKc_MAP3K-like"/>
    <property type="match status" value="1"/>
</dbReference>
<dbReference type="Gene3D" id="1.25.40.20">
    <property type="entry name" value="Ankyrin repeat-containing domain"/>
    <property type="match status" value="1"/>
</dbReference>
<dbReference type="Gene3D" id="1.10.510.10">
    <property type="entry name" value="Transferase(Phosphotransferase) domain 1"/>
    <property type="match status" value="1"/>
</dbReference>
<dbReference type="InterPro" id="IPR002110">
    <property type="entry name" value="Ankyrin_rpt"/>
</dbReference>
<dbReference type="InterPro" id="IPR036770">
    <property type="entry name" value="Ankyrin_rpt-contain_sf"/>
</dbReference>
<dbReference type="InterPro" id="IPR011009">
    <property type="entry name" value="Kinase-like_dom_sf"/>
</dbReference>
<dbReference type="InterPro" id="IPR000719">
    <property type="entry name" value="Prot_kinase_dom"/>
</dbReference>
<dbReference type="InterPro" id="IPR017441">
    <property type="entry name" value="Protein_kinase_ATP_BS"/>
</dbReference>
<dbReference type="InterPro" id="IPR001245">
    <property type="entry name" value="Ser-Thr/Tyr_kinase_cat_dom"/>
</dbReference>
<dbReference type="InterPro" id="IPR051681">
    <property type="entry name" value="Ser/Thr_Kinases-Pseudokinases"/>
</dbReference>
<dbReference type="InterPro" id="IPR008266">
    <property type="entry name" value="Tyr_kinase_AS"/>
</dbReference>
<dbReference type="PANTHER" id="PTHR44329">
    <property type="entry name" value="SERINE/THREONINE-PROTEIN KINASE TNNI3K-RELATED"/>
    <property type="match status" value="1"/>
</dbReference>
<dbReference type="Pfam" id="PF12796">
    <property type="entry name" value="Ank_2"/>
    <property type="match status" value="1"/>
</dbReference>
<dbReference type="Pfam" id="PF07714">
    <property type="entry name" value="PK_Tyr_Ser-Thr"/>
    <property type="match status" value="1"/>
</dbReference>
<dbReference type="PRINTS" id="PR00109">
    <property type="entry name" value="TYRKINASE"/>
</dbReference>
<dbReference type="SMART" id="SM00248">
    <property type="entry name" value="ANK"/>
    <property type="match status" value="4"/>
</dbReference>
<dbReference type="SUPFAM" id="SSF48403">
    <property type="entry name" value="Ankyrin repeat"/>
    <property type="match status" value="1"/>
</dbReference>
<dbReference type="SUPFAM" id="SSF56112">
    <property type="entry name" value="Protein kinase-like (PK-like)"/>
    <property type="match status" value="1"/>
</dbReference>
<dbReference type="PROSITE" id="PS50297">
    <property type="entry name" value="ANK_REP_REGION"/>
    <property type="match status" value="1"/>
</dbReference>
<dbReference type="PROSITE" id="PS50088">
    <property type="entry name" value="ANK_REPEAT"/>
    <property type="match status" value="2"/>
</dbReference>
<dbReference type="PROSITE" id="PS00107">
    <property type="entry name" value="PROTEIN_KINASE_ATP"/>
    <property type="match status" value="1"/>
</dbReference>
<dbReference type="PROSITE" id="PS50011">
    <property type="entry name" value="PROTEIN_KINASE_DOM"/>
    <property type="match status" value="1"/>
</dbReference>
<dbReference type="PROSITE" id="PS00109">
    <property type="entry name" value="PROTEIN_KINASE_TYR"/>
    <property type="match status" value="1"/>
</dbReference>
<comment type="catalytic activity">
    <reaction>
        <text>L-seryl-[protein] + ATP = O-phospho-L-seryl-[protein] + ADP + H(+)</text>
        <dbReference type="Rhea" id="RHEA:17989"/>
        <dbReference type="Rhea" id="RHEA-COMP:9863"/>
        <dbReference type="Rhea" id="RHEA-COMP:11604"/>
        <dbReference type="ChEBI" id="CHEBI:15378"/>
        <dbReference type="ChEBI" id="CHEBI:29999"/>
        <dbReference type="ChEBI" id="CHEBI:30616"/>
        <dbReference type="ChEBI" id="CHEBI:83421"/>
        <dbReference type="ChEBI" id="CHEBI:456216"/>
        <dbReference type="EC" id="2.7.11.1"/>
    </reaction>
</comment>
<comment type="catalytic activity">
    <reaction>
        <text>L-threonyl-[protein] + ATP = O-phospho-L-threonyl-[protein] + ADP + H(+)</text>
        <dbReference type="Rhea" id="RHEA:46608"/>
        <dbReference type="Rhea" id="RHEA-COMP:11060"/>
        <dbReference type="Rhea" id="RHEA-COMP:11605"/>
        <dbReference type="ChEBI" id="CHEBI:15378"/>
        <dbReference type="ChEBI" id="CHEBI:30013"/>
        <dbReference type="ChEBI" id="CHEBI:30616"/>
        <dbReference type="ChEBI" id="CHEBI:61977"/>
        <dbReference type="ChEBI" id="CHEBI:456216"/>
        <dbReference type="EC" id="2.7.11.1"/>
    </reaction>
</comment>
<comment type="subcellular location">
    <subcellularLocation>
        <location evidence="5">Membrane</location>
        <topology evidence="5">Single-pass type I membrane protein</topology>
    </subcellularLocation>
</comment>
<comment type="similarity">
    <text evidence="5">Belongs to the protein kinase superfamily. TKL Ser/Thr protein kinase family.</text>
</comment>
<gene>
    <name type="ORF">DDB_G0278521</name>
</gene>
<accession>Q54XY6</accession>
<organism>
    <name type="scientific">Dictyostelium discoideum</name>
    <name type="common">Social amoeba</name>
    <dbReference type="NCBI Taxonomy" id="44689"/>
    <lineage>
        <taxon>Eukaryota</taxon>
        <taxon>Amoebozoa</taxon>
        <taxon>Evosea</taxon>
        <taxon>Eumycetozoa</taxon>
        <taxon>Dictyostelia</taxon>
        <taxon>Dictyosteliales</taxon>
        <taxon>Dictyosteliaceae</taxon>
        <taxon>Dictyostelium</taxon>
    </lineage>
</organism>
<name>Y0019_DICDI</name>
<feature type="chain" id="PRO_0000358900" description="Probable serine/threonine-protein kinase DDB_G0278521">
    <location>
        <begin position="1"/>
        <end position="908"/>
    </location>
</feature>
<feature type="topological domain" description="Extracellular" evidence="1">
    <location>
        <begin position="1"/>
        <end position="153"/>
    </location>
</feature>
<feature type="transmembrane region" description="Helical" evidence="1">
    <location>
        <begin position="154"/>
        <end position="174"/>
    </location>
</feature>
<feature type="topological domain" description="Cytoplasmic" evidence="1">
    <location>
        <begin position="175"/>
        <end position="908"/>
    </location>
</feature>
<feature type="repeat" description="ANK 1">
    <location>
        <begin position="258"/>
        <end position="289"/>
    </location>
</feature>
<feature type="repeat" description="ANK 2">
    <location>
        <begin position="300"/>
        <end position="326"/>
    </location>
</feature>
<feature type="repeat" description="ANK 3">
    <location>
        <begin position="330"/>
        <end position="361"/>
    </location>
</feature>
<feature type="repeat" description="ANK 4">
    <location>
        <begin position="362"/>
        <end position="391"/>
    </location>
</feature>
<feature type="repeat" description="ANK 5">
    <location>
        <begin position="395"/>
        <end position="424"/>
    </location>
</feature>
<feature type="repeat" description="ANK 6">
    <location>
        <begin position="495"/>
        <end position="524"/>
    </location>
</feature>
<feature type="domain" description="Protein kinase" evidence="2">
    <location>
        <begin position="530"/>
        <end position="817"/>
    </location>
</feature>
<feature type="region of interest" description="Disordered" evidence="4">
    <location>
        <begin position="461"/>
        <end position="491"/>
    </location>
</feature>
<feature type="compositionally biased region" description="Low complexity" evidence="4">
    <location>
        <begin position="461"/>
        <end position="472"/>
    </location>
</feature>
<feature type="compositionally biased region" description="Polar residues" evidence="4">
    <location>
        <begin position="480"/>
        <end position="490"/>
    </location>
</feature>
<feature type="active site" description="Proton acceptor" evidence="2 3">
    <location>
        <position position="677"/>
    </location>
</feature>
<feature type="binding site" evidence="2">
    <location>
        <begin position="536"/>
        <end position="544"/>
    </location>
    <ligand>
        <name>ATP</name>
        <dbReference type="ChEBI" id="CHEBI:30616"/>
    </ligand>
</feature>
<feature type="binding site" evidence="2">
    <location>
        <position position="557"/>
    </location>
    <ligand>
        <name>ATP</name>
        <dbReference type="ChEBI" id="CHEBI:30616"/>
    </ligand>
</feature>
<reference key="1">
    <citation type="journal article" date="2005" name="Nature">
        <title>The genome of the social amoeba Dictyostelium discoideum.</title>
        <authorList>
            <person name="Eichinger L."/>
            <person name="Pachebat J.A."/>
            <person name="Gloeckner G."/>
            <person name="Rajandream M.A."/>
            <person name="Sucgang R."/>
            <person name="Berriman M."/>
            <person name="Song J."/>
            <person name="Olsen R."/>
            <person name="Szafranski K."/>
            <person name="Xu Q."/>
            <person name="Tunggal B."/>
            <person name="Kummerfeld S."/>
            <person name="Madera M."/>
            <person name="Konfortov B.A."/>
            <person name="Rivero F."/>
            <person name="Bankier A.T."/>
            <person name="Lehmann R."/>
            <person name="Hamlin N."/>
            <person name="Davies R."/>
            <person name="Gaudet P."/>
            <person name="Fey P."/>
            <person name="Pilcher K."/>
            <person name="Chen G."/>
            <person name="Saunders D."/>
            <person name="Sodergren E.J."/>
            <person name="Davis P."/>
            <person name="Kerhornou A."/>
            <person name="Nie X."/>
            <person name="Hall N."/>
            <person name="Anjard C."/>
            <person name="Hemphill L."/>
            <person name="Bason N."/>
            <person name="Farbrother P."/>
            <person name="Desany B."/>
            <person name="Just E."/>
            <person name="Morio T."/>
            <person name="Rost R."/>
            <person name="Churcher C.M."/>
            <person name="Cooper J."/>
            <person name="Haydock S."/>
            <person name="van Driessche N."/>
            <person name="Cronin A."/>
            <person name="Goodhead I."/>
            <person name="Muzny D.M."/>
            <person name="Mourier T."/>
            <person name="Pain A."/>
            <person name="Lu M."/>
            <person name="Harper D."/>
            <person name="Lindsay R."/>
            <person name="Hauser H."/>
            <person name="James K.D."/>
            <person name="Quiles M."/>
            <person name="Madan Babu M."/>
            <person name="Saito T."/>
            <person name="Buchrieser C."/>
            <person name="Wardroper A."/>
            <person name="Felder M."/>
            <person name="Thangavelu M."/>
            <person name="Johnson D."/>
            <person name="Knights A."/>
            <person name="Loulseged H."/>
            <person name="Mungall K.L."/>
            <person name="Oliver K."/>
            <person name="Price C."/>
            <person name="Quail M.A."/>
            <person name="Urushihara H."/>
            <person name="Hernandez J."/>
            <person name="Rabbinowitsch E."/>
            <person name="Steffen D."/>
            <person name="Sanders M."/>
            <person name="Ma J."/>
            <person name="Kohara Y."/>
            <person name="Sharp S."/>
            <person name="Simmonds M.N."/>
            <person name="Spiegler S."/>
            <person name="Tivey A."/>
            <person name="Sugano S."/>
            <person name="White B."/>
            <person name="Walker D."/>
            <person name="Woodward J.R."/>
            <person name="Winckler T."/>
            <person name="Tanaka Y."/>
            <person name="Shaulsky G."/>
            <person name="Schleicher M."/>
            <person name="Weinstock G.M."/>
            <person name="Rosenthal A."/>
            <person name="Cox E.C."/>
            <person name="Chisholm R.L."/>
            <person name="Gibbs R.A."/>
            <person name="Loomis W.F."/>
            <person name="Platzer M."/>
            <person name="Kay R.R."/>
            <person name="Williams J.G."/>
            <person name="Dear P.H."/>
            <person name="Noegel A.A."/>
            <person name="Barrell B.G."/>
            <person name="Kuspa A."/>
        </authorList>
    </citation>
    <scope>NUCLEOTIDE SEQUENCE [LARGE SCALE GENOMIC DNA]</scope>
    <source>
        <strain>AX4</strain>
    </source>
</reference>
<evidence type="ECO:0000255" key="1"/>
<evidence type="ECO:0000255" key="2">
    <source>
        <dbReference type="PROSITE-ProRule" id="PRU00159"/>
    </source>
</evidence>
<evidence type="ECO:0000255" key="3">
    <source>
        <dbReference type="PROSITE-ProRule" id="PRU10028"/>
    </source>
</evidence>
<evidence type="ECO:0000256" key="4">
    <source>
        <dbReference type="SAM" id="MobiDB-lite"/>
    </source>
</evidence>
<evidence type="ECO:0000305" key="5"/>
<sequence>MSNNKIIESLAILYLNNYINDNDIYSLSLINREFHINIIKDDYFYSTINKNYLFLYIKIFKLLSIKVKLNPNWINIINNNNNINNNNNNNNNNNNNNNNNNNNKIKLIKNNFSVISERLNFLIQCKFNLHRYLDNNDLFITILRGEKLSTLDRIICFSIIYSQDQILLFLLNFILSNINCNNNNNNNNNNNNNNNNNNISNISNSNRLLANNSYNIQFNQQIPTQNELINLNKCLQFSTSTTTTTTTTMVPPFNENILKVYPIYFAIVKVIGGGSLVRFLLSILPNVYNITNVNCKLPITNRSALFYSTTREMTLLLLQLGCNIHDMDYKGMLPIHYHSLNGHVDVVKCLIDDSTINALDQSNNTPLNLASLSGNLSLAKILLNSGARLSIDNLNGRYPIHNACVNGNIDLIRYFLELYSKMNSTTLLPSTTTTTTTTTTTMTTTTTTAITTTTATTIQNNSNNLTNSNSSSVGGLRISNGGNTQQQSIQIPDKENNTPIDLLVLNNHFTIAIELLKYEGYIVGKEEFNFKTARKIGAGAFGDVYLVEWRNKNVAVKRVKIEKILESGKSYQWIRDKFILEAVLMVKLSNFSSFVKLYATCIEEKELLLVLEFCDNGSLYTILNTIPIGGAGANNNNNNNNNNDIIQSLPSINTLSLNIANGMNYLHSLKPQIIHRDLTSQNILIDRNGIAKIADFGISRFKNDIGDKTMTSIGNPRFRSPEVTKGQKYSEKVDVFGFGMILYEMFTRRVPFHDYEQIAASFKIANAERPPLPQTIDHRWSNLIQICWDQNPNNRPSFDQILTIIQNLPIANIPKFLVPLQQNQNQIQNQNQNQNQNNGKLDLSTSSSSITNLNNAVTAKLSLSTSGGLFSGDSDYTVGTCSGYDIGYDNDGDIIDYSSDQNDSDLYD</sequence>
<keyword id="KW-0040">ANK repeat</keyword>
<keyword id="KW-0067">ATP-binding</keyword>
<keyword id="KW-0418">Kinase</keyword>
<keyword id="KW-0472">Membrane</keyword>
<keyword id="KW-0547">Nucleotide-binding</keyword>
<keyword id="KW-1185">Reference proteome</keyword>
<keyword id="KW-0677">Repeat</keyword>
<keyword id="KW-0723">Serine/threonine-protein kinase</keyword>
<keyword id="KW-0808">Transferase</keyword>
<keyword id="KW-0812">Transmembrane</keyword>
<keyword id="KW-1133">Transmembrane helix</keyword>